<accession>A0A0H3C9Q9</accession>
<gene>
    <name evidence="8 9 10" type="primary">dipM</name>
    <name evidence="13" type="ordered locus">CCNA_02075</name>
</gene>
<organism>
    <name type="scientific">Caulobacter vibrioides (strain NA1000 / CB15N)</name>
    <name type="common">Caulobacter crescentus</name>
    <dbReference type="NCBI Taxonomy" id="565050"/>
    <lineage>
        <taxon>Bacteria</taxon>
        <taxon>Pseudomonadati</taxon>
        <taxon>Pseudomonadota</taxon>
        <taxon>Alphaproteobacteria</taxon>
        <taxon>Caulobacterales</taxon>
        <taxon>Caulobacteraceae</taxon>
        <taxon>Caulobacter</taxon>
    </lineage>
</organism>
<keyword id="KW-0131">Cell cycle</keyword>
<keyword id="KW-0132">Cell division</keyword>
<keyword id="KW-0574">Periplasm</keyword>
<keyword id="KW-1185">Reference proteome</keyword>
<keyword id="KW-0677">Repeat</keyword>
<keyword id="KW-0732">Signal</keyword>
<sequence length="609" mass="63072">MRQLWTQAAVIALTAGTLGAPAHASGQSGQRFTPNFPITQPAAPPPGETIQAQPGEAESLPRPTPIPVQSAPPIAQAELPPPAPVSTPAPAPQPVLRATPPRTVVTTTVTGPVVEVAGKPQVRVVESGDALDAIARGMGSTRAELVKLNDLEPPYRLKLGQKIKGPATTAKAYVVQTGDTMFAIAKRFNVTAAALAEENDLKSGAAIKKGQKLLLPDGYKDKGPIKTTQVIPGTPATMVAEAEPAPATTRPATPAATPSRPVRQPVSEETSEPATTSTTTLSVTGSVVTVAGPRQVHTVKSGDTLTAIARKFDMSVSELAEANKLDTEKPLKLGAKIKGPATTQKAYSVQTGDTLGEIAKRFNVSVKALAAENNLRATASLKKGQKIALPDGFRDKGPIRTTTTTRPATPPANTYARVDSSAAAASTPSSPVPYTPSGAAPRPSAPVAAQPITPPPSSGRTIIETAAAPTEAEIIASGKGKFAWPLRGDIISSFGVKGTGQRNDGLNIRAPQGTPVLSSADGEIAYAGNQVPTFGNLVLVKHADGWVTAYAHLSSTNVKMRQQVKQGEQLGTVGATGGVNEPQLHFEMRYAPTVKDKAKPVDPALVLPR</sequence>
<protein>
    <recommendedName>
        <fullName evidence="11">Cell division protein DipM</fullName>
    </recommendedName>
    <alternativeName>
        <fullName evidence="8">Division and polarity-related metallopeptidase</fullName>
    </alternativeName>
    <alternativeName>
        <fullName evidence="10">Division involved peptidase carrying LysM domains</fullName>
    </alternativeName>
    <alternativeName>
        <fullName evidence="9">Division involved protein with LysM domains</fullName>
    </alternativeName>
</protein>
<proteinExistence type="inferred from homology"/>
<dbReference type="EMBL" id="CP001340">
    <property type="protein sequence ID" value="ACL95540.1"/>
    <property type="molecule type" value="Genomic_DNA"/>
</dbReference>
<dbReference type="RefSeq" id="WP_010919862.1">
    <property type="nucleotide sequence ID" value="NC_011916.1"/>
</dbReference>
<dbReference type="RefSeq" id="YP_002517448.1">
    <property type="nucleotide sequence ID" value="NC_011916.1"/>
</dbReference>
<dbReference type="SMR" id="A0A0H3C9Q9"/>
<dbReference type="GeneID" id="7330381"/>
<dbReference type="KEGG" id="ccs:CCNA_02075"/>
<dbReference type="PATRIC" id="fig|565050.3.peg.2033"/>
<dbReference type="HOGENOM" id="CLU_029425_0_0_5"/>
<dbReference type="OrthoDB" id="9795421at2"/>
<dbReference type="PhylomeDB" id="A0A0H3C9Q9"/>
<dbReference type="Proteomes" id="UP000001364">
    <property type="component" value="Chromosome"/>
</dbReference>
<dbReference type="GO" id="GO:0042597">
    <property type="term" value="C:periplasmic space"/>
    <property type="evidence" value="ECO:0007669"/>
    <property type="project" value="UniProtKB-SubCell"/>
</dbReference>
<dbReference type="GO" id="GO:0004222">
    <property type="term" value="F:metalloendopeptidase activity"/>
    <property type="evidence" value="ECO:0007669"/>
    <property type="project" value="TreeGrafter"/>
</dbReference>
<dbReference type="GO" id="GO:0051301">
    <property type="term" value="P:cell division"/>
    <property type="evidence" value="ECO:0007669"/>
    <property type="project" value="UniProtKB-KW"/>
</dbReference>
<dbReference type="CDD" id="cd00118">
    <property type="entry name" value="LysM"/>
    <property type="match status" value="4"/>
</dbReference>
<dbReference type="CDD" id="cd12797">
    <property type="entry name" value="M23_peptidase"/>
    <property type="match status" value="1"/>
</dbReference>
<dbReference type="Gene3D" id="2.70.70.10">
    <property type="entry name" value="Glucose Permease (Domain IIA)"/>
    <property type="match status" value="1"/>
</dbReference>
<dbReference type="Gene3D" id="3.10.350.10">
    <property type="entry name" value="LysM domain"/>
    <property type="match status" value="4"/>
</dbReference>
<dbReference type="InterPro" id="IPR050570">
    <property type="entry name" value="Cell_wall_metabolism_enzyme"/>
</dbReference>
<dbReference type="InterPro" id="IPR011055">
    <property type="entry name" value="Dup_hybrid_motif"/>
</dbReference>
<dbReference type="InterPro" id="IPR018392">
    <property type="entry name" value="LysM_dom"/>
</dbReference>
<dbReference type="InterPro" id="IPR036779">
    <property type="entry name" value="LysM_dom_sf"/>
</dbReference>
<dbReference type="InterPro" id="IPR016047">
    <property type="entry name" value="Peptidase_M23"/>
</dbReference>
<dbReference type="PANTHER" id="PTHR21666:SF270">
    <property type="entry name" value="MUREIN HYDROLASE ACTIVATOR ENVC"/>
    <property type="match status" value="1"/>
</dbReference>
<dbReference type="PANTHER" id="PTHR21666">
    <property type="entry name" value="PEPTIDASE-RELATED"/>
    <property type="match status" value="1"/>
</dbReference>
<dbReference type="Pfam" id="PF01476">
    <property type="entry name" value="LysM"/>
    <property type="match status" value="4"/>
</dbReference>
<dbReference type="Pfam" id="PF01551">
    <property type="entry name" value="Peptidase_M23"/>
    <property type="match status" value="1"/>
</dbReference>
<dbReference type="SMART" id="SM00257">
    <property type="entry name" value="LysM"/>
    <property type="match status" value="4"/>
</dbReference>
<dbReference type="SUPFAM" id="SSF51261">
    <property type="entry name" value="Duplicated hybrid motif"/>
    <property type="match status" value="1"/>
</dbReference>
<dbReference type="SUPFAM" id="SSF54106">
    <property type="entry name" value="LysM domain"/>
    <property type="match status" value="4"/>
</dbReference>
<dbReference type="PROSITE" id="PS51782">
    <property type="entry name" value="LYSM"/>
    <property type="match status" value="4"/>
</dbReference>
<comment type="function">
    <text evidence="4 5 6 7">Required for efficient cell division, cell polarity and normal cell morphology (PubMed:20497502, PubMed:20497503, PubMed:20497504). Facilitates remodeling of the peptidoglycan layer and, thus, coordinated constriction of the cell envelope during the division process (PubMed:20497502, PubMed:20497504). Plays a critical role in maintaining proper cell envelope architecture during growth and division (PubMed:20497504). Required for normal envelope invagination during cell division and to establish or maintain outer membrane connections throughout the cell envelope (PubMed:20497504). May serve as a regulatory hub coordinating the activities of multiple peptidoglycan-degrading enzymes during cell constriction. Required to position SdpA and SdpB at midcell (PubMed:28833791).</text>
</comment>
<comment type="subcellular location">
    <subcellularLocation>
        <location evidence="4 5 6">Periplasm</location>
    </subcellularLocation>
    <text evidence="4 5 6">Localizes to the division site in an FtsZ-dependent manner during early stages of the division process (PubMed:20497502, PubMed:20497503, PubMed:20497504). Localization also depends on FtsN (PubMed:20497502).</text>
</comment>
<comment type="domain">
    <text evidence="4 5 6">Composed of four peptidoglycan binding (LysM) domains and a C-terminal lysostaphin-like (LytM) peptidase domain. The LysM domains are the major mediators of the localization to the division site, probably via direct interaction with peptidoglycans. The LytM region is dispensable for localization, but is essential for function.</text>
</comment>
<comment type="disruption phenotype">
    <text evidence="4 5 6">Deletion mutant exhibits morphological defects, including cell widening and filamentation, and cell division defects (PubMed:20497502, PubMed:20497503, PubMed:20497504). Inactivation causes severe defects in outer membrane invagination, resulting in a significant delay between cytoplasmic compartmentalization and final separation of the daughter cells (PubMed:20497502). Cells lacking the gene also show outer membrane blebbing at the division site, at cell poles and along the cell body (PubMed:20497504).</text>
</comment>
<evidence type="ECO:0000255" key="1"/>
<evidence type="ECO:0000255" key="2">
    <source>
        <dbReference type="PROSITE-ProRule" id="PRU01118"/>
    </source>
</evidence>
<evidence type="ECO:0000256" key="3">
    <source>
        <dbReference type="SAM" id="MobiDB-lite"/>
    </source>
</evidence>
<evidence type="ECO:0000269" key="4">
    <source>
    </source>
</evidence>
<evidence type="ECO:0000269" key="5">
    <source>
    </source>
</evidence>
<evidence type="ECO:0000269" key="6">
    <source>
    </source>
</evidence>
<evidence type="ECO:0000269" key="7">
    <source>
    </source>
</evidence>
<evidence type="ECO:0000303" key="8">
    <source>
    </source>
</evidence>
<evidence type="ECO:0000303" key="9">
    <source>
    </source>
</evidence>
<evidence type="ECO:0000303" key="10">
    <source>
    </source>
</evidence>
<evidence type="ECO:0000305" key="11"/>
<evidence type="ECO:0000305" key="12">
    <source>
    </source>
</evidence>
<evidence type="ECO:0000312" key="13">
    <source>
        <dbReference type="EMBL" id="ACL95540.1"/>
    </source>
</evidence>
<feature type="signal peptide" evidence="1">
    <location>
        <begin position="1"/>
        <end position="24"/>
    </location>
</feature>
<feature type="chain" id="PRO_5002606068" description="Cell division protein DipM" evidence="1">
    <location>
        <begin position="25"/>
        <end position="609"/>
    </location>
</feature>
<feature type="domain" description="LysM 1" evidence="2">
    <location>
        <begin position="121"/>
        <end position="165"/>
    </location>
</feature>
<feature type="domain" description="LysM 2" evidence="2">
    <location>
        <begin position="171"/>
        <end position="215"/>
    </location>
</feature>
<feature type="domain" description="LysM 3" evidence="2">
    <location>
        <begin position="295"/>
        <end position="339"/>
    </location>
</feature>
<feature type="domain" description="LysM 4" evidence="2">
    <location>
        <begin position="345"/>
        <end position="389"/>
    </location>
</feature>
<feature type="region of interest" description="Disordered" evidence="3">
    <location>
        <begin position="21"/>
        <end position="103"/>
    </location>
</feature>
<feature type="region of interest" description="Disordered" evidence="3">
    <location>
        <begin position="242"/>
        <end position="280"/>
    </location>
</feature>
<feature type="region of interest" description="Disordered" evidence="3">
    <location>
        <begin position="389"/>
        <end position="457"/>
    </location>
</feature>
<feature type="region of interest" description="LytM" evidence="12">
    <location>
        <begin position="503"/>
        <end position="603"/>
    </location>
</feature>
<feature type="compositionally biased region" description="Polar residues" evidence="3">
    <location>
        <begin position="25"/>
        <end position="38"/>
    </location>
</feature>
<feature type="compositionally biased region" description="Pro residues" evidence="3">
    <location>
        <begin position="79"/>
        <end position="93"/>
    </location>
</feature>
<feature type="compositionally biased region" description="Low complexity" evidence="3">
    <location>
        <begin position="242"/>
        <end position="258"/>
    </location>
</feature>
<feature type="compositionally biased region" description="Low complexity" evidence="3">
    <location>
        <begin position="265"/>
        <end position="280"/>
    </location>
</feature>
<feature type="compositionally biased region" description="Low complexity" evidence="3">
    <location>
        <begin position="400"/>
        <end position="429"/>
    </location>
</feature>
<name>DIPM_CAUVN</name>
<reference key="1">
    <citation type="journal article" date="2010" name="J. Bacteriol.">
        <title>The genetic basis of laboratory adaptation in Caulobacter crescentus.</title>
        <authorList>
            <person name="Marks M.E."/>
            <person name="Castro-Rojas C.M."/>
            <person name="Teiling C."/>
            <person name="Du L."/>
            <person name="Kapatral V."/>
            <person name="Walunas T.L."/>
            <person name="Crosson S."/>
        </authorList>
    </citation>
    <scope>NUCLEOTIDE SEQUENCE [LARGE SCALE GENOMIC DNA]</scope>
    <source>
        <strain>NA1000 / CB15N</strain>
    </source>
</reference>
<reference key="2">
    <citation type="journal article" date="2010" name="Mol. Microbiol.">
        <title>DipM links peptidoglycan remodelling to outer membrane organization in Caulobacter.</title>
        <authorList>
            <person name="Goley E.D."/>
            <person name="Comolli L.R."/>
            <person name="Fero K.E."/>
            <person name="Downing K.H."/>
            <person name="Shapiro L."/>
        </authorList>
    </citation>
    <scope>FUNCTION</scope>
    <scope>SUBCELLULAR LOCATION</scope>
    <scope>DOMAIN</scope>
    <scope>DISRUPTION PHENOTYPE</scope>
    <source>
        <strain>NA1000 / CB15N</strain>
    </source>
</reference>
<reference key="3">
    <citation type="journal article" date="2010" name="Mol. Microbiol.">
        <title>A protein critical for cell constriction in the Gram-negative bacterium Caulobacter crescentus localizes at the division site through its peptidoglycan-binding LysM domains.</title>
        <authorList>
            <person name="Poggio S."/>
            <person name="Takacs C.N."/>
            <person name="Vollmer W."/>
            <person name="Jacobs-Wagner C."/>
        </authorList>
    </citation>
    <scope>FUNCTION</scope>
    <scope>SUBCELLULAR LOCATION</scope>
    <scope>DOMAIN</scope>
    <scope>DISRUPTION PHENOTYPE</scope>
    <source>
        <strain>NA1000 / CB15N</strain>
    </source>
</reference>
<reference key="4">
    <citation type="journal article" date="2010" name="Mol. Microbiol.">
        <title>DipM, a new factor required for peptidoglycan remodelling during cell division in Caulobacter crescentus.</title>
        <authorList>
            <person name="Moell A."/>
            <person name="Schlimpert S."/>
            <person name="Briegel A."/>
            <person name="Jensen G.J."/>
            <person name="Thanbichler M."/>
        </authorList>
    </citation>
    <scope>FUNCTION</scope>
    <scope>SUBCELLULAR LOCATION</scope>
    <scope>DOMAIN</scope>
    <scope>DISRUPTION PHENOTYPE</scope>
    <source>
        <strain>NA1000 / CB15N</strain>
    </source>
</reference>
<reference key="5">
    <citation type="journal article" date="2017" name="Mol. Microbiol.">
        <title>LytM factors affect the recruitment of autolysins to the cell division site in Caulobacter crescentus.</title>
        <authorList>
            <person name="Zielinska A."/>
            <person name="Billini M."/>
            <person name="Moell A."/>
            <person name="Kremer K."/>
            <person name="Briegel A."/>
            <person name="Izquierdo Martinez A."/>
            <person name="Jensen G.J."/>
            <person name="Thanbichler M."/>
        </authorList>
    </citation>
    <scope>FUNCTION</scope>
</reference>